<comment type="function">
    <text evidence="3 6">Sodium-independent anion exchanger which mediates the electroneutral exchange of chloride for bicarbonate ions across the cell membrane. May be involved in the regulation of intracellular pH, and the modulation of cardiac action potential (By similarity).</text>
</comment>
<comment type="catalytic activity">
    <reaction evidence="6">
        <text>hydrogencarbonate(in) + chloride(out) = hydrogencarbonate(out) + chloride(in)</text>
        <dbReference type="Rhea" id="RHEA:72363"/>
        <dbReference type="ChEBI" id="CHEBI:17544"/>
        <dbReference type="ChEBI" id="CHEBI:17996"/>
    </reaction>
</comment>
<comment type="subcellular location">
    <subcellularLocation>
        <location evidence="6">Cell membrane</location>
        <topology evidence="4">Multi-pass membrane protein</topology>
    </subcellularLocation>
</comment>
<comment type="tissue specificity">
    <text evidence="7">Expressed in the brain and heart.</text>
</comment>
<comment type="similarity">
    <text evidence="8">Belongs to the anion exchanger (TC 2.A.31) family.</text>
</comment>
<organism>
    <name type="scientific">Rattus norvegicus</name>
    <name type="common">Rat</name>
    <dbReference type="NCBI Taxonomy" id="10116"/>
    <lineage>
        <taxon>Eukaryota</taxon>
        <taxon>Metazoa</taxon>
        <taxon>Chordata</taxon>
        <taxon>Craniata</taxon>
        <taxon>Vertebrata</taxon>
        <taxon>Euteleostomi</taxon>
        <taxon>Mammalia</taxon>
        <taxon>Eutheria</taxon>
        <taxon>Euarchontoglires</taxon>
        <taxon>Glires</taxon>
        <taxon>Rodentia</taxon>
        <taxon>Myomorpha</taxon>
        <taxon>Muroidea</taxon>
        <taxon>Muridae</taxon>
        <taxon>Murinae</taxon>
        <taxon>Rattus</taxon>
    </lineage>
</organism>
<dbReference type="EMBL" id="J05167">
    <property type="protein sequence ID" value="AAA40798.1"/>
    <property type="molecule type" value="mRNA"/>
</dbReference>
<dbReference type="PIR" id="B34911">
    <property type="entry name" value="B34911"/>
</dbReference>
<dbReference type="RefSeq" id="NP_058745.1">
    <property type="nucleotide sequence ID" value="NM_017049.1"/>
</dbReference>
<dbReference type="SMR" id="P23348"/>
<dbReference type="BioGRID" id="246905">
    <property type="interactions" value="1"/>
</dbReference>
<dbReference type="FunCoup" id="P23348">
    <property type="interactions" value="1192"/>
</dbReference>
<dbReference type="STRING" id="10116.ENSRNOP00000027337"/>
<dbReference type="GlyCosmos" id="P23348">
    <property type="glycosylation" value="1 site, No reported glycans"/>
</dbReference>
<dbReference type="GlyGen" id="P23348">
    <property type="glycosylation" value="2 sites"/>
</dbReference>
<dbReference type="iPTMnet" id="P23348"/>
<dbReference type="PhosphoSitePlus" id="P23348"/>
<dbReference type="PaxDb" id="10116-ENSRNOP00000027337"/>
<dbReference type="GeneID" id="24781"/>
<dbReference type="KEGG" id="rno:24781"/>
<dbReference type="UCSC" id="RGD:3712">
    <property type="organism name" value="rat"/>
</dbReference>
<dbReference type="AGR" id="RGD:3712"/>
<dbReference type="CTD" id="6508"/>
<dbReference type="RGD" id="3712">
    <property type="gene designation" value="Slc4a3"/>
</dbReference>
<dbReference type="eggNOG" id="KOG1172">
    <property type="taxonomic scope" value="Eukaryota"/>
</dbReference>
<dbReference type="InParanoid" id="P23348"/>
<dbReference type="PhylomeDB" id="P23348"/>
<dbReference type="Reactome" id="R-RNO-425381">
    <property type="pathway name" value="Bicarbonate transporters"/>
</dbReference>
<dbReference type="PRO" id="PR:P23348"/>
<dbReference type="Proteomes" id="UP000002494">
    <property type="component" value="Unplaced"/>
</dbReference>
<dbReference type="GO" id="GO:0009897">
    <property type="term" value="C:external side of plasma membrane"/>
    <property type="evidence" value="ECO:0000266"/>
    <property type="project" value="RGD"/>
</dbReference>
<dbReference type="GO" id="GO:0005886">
    <property type="term" value="C:plasma membrane"/>
    <property type="evidence" value="ECO:0000314"/>
    <property type="project" value="UniProtKB"/>
</dbReference>
<dbReference type="GO" id="GO:0015106">
    <property type="term" value="F:bicarbonate transmembrane transporter activity"/>
    <property type="evidence" value="ECO:0000266"/>
    <property type="project" value="RGD"/>
</dbReference>
<dbReference type="GO" id="GO:0140900">
    <property type="term" value="F:chloride:bicarbonate antiporter activity"/>
    <property type="evidence" value="ECO:0000314"/>
    <property type="project" value="UniProtKB"/>
</dbReference>
<dbReference type="GO" id="GO:0019899">
    <property type="term" value="F:enzyme binding"/>
    <property type="evidence" value="ECO:0000353"/>
    <property type="project" value="RGD"/>
</dbReference>
<dbReference type="GO" id="GO:0015701">
    <property type="term" value="P:bicarbonate transport"/>
    <property type="evidence" value="ECO:0000266"/>
    <property type="project" value="RGD"/>
</dbReference>
<dbReference type="GO" id="GO:0061337">
    <property type="term" value="P:cardiac conduction"/>
    <property type="evidence" value="ECO:0000266"/>
    <property type="project" value="RGD"/>
</dbReference>
<dbReference type="GO" id="GO:0045851">
    <property type="term" value="P:pH reduction"/>
    <property type="evidence" value="ECO:0000250"/>
    <property type="project" value="UniProtKB"/>
</dbReference>
<dbReference type="GO" id="GO:0098901">
    <property type="term" value="P:regulation of cardiac muscle cell action potential"/>
    <property type="evidence" value="ECO:0000250"/>
    <property type="project" value="UniProtKB"/>
</dbReference>
<dbReference type="GO" id="GO:0051453">
    <property type="term" value="P:regulation of intracellular pH"/>
    <property type="evidence" value="ECO:0000266"/>
    <property type="project" value="RGD"/>
</dbReference>
<dbReference type="GO" id="GO:0055085">
    <property type="term" value="P:transmembrane transport"/>
    <property type="evidence" value="ECO:0000318"/>
    <property type="project" value="GO_Central"/>
</dbReference>
<dbReference type="FunFam" id="1.10.287.570:FF:000001">
    <property type="entry name" value="Anion exchange protein"/>
    <property type="match status" value="1"/>
</dbReference>
<dbReference type="FunFam" id="3.40.930.10:FF:000004">
    <property type="entry name" value="Anion exchange protein"/>
    <property type="match status" value="1"/>
</dbReference>
<dbReference type="Gene3D" id="1.10.287.570">
    <property type="entry name" value="Helical hairpin bin"/>
    <property type="match status" value="1"/>
</dbReference>
<dbReference type="Gene3D" id="3.40.930.10">
    <property type="entry name" value="Mannitol-specific EII, Chain A"/>
    <property type="match status" value="1"/>
</dbReference>
<dbReference type="InterPro" id="IPR001717">
    <property type="entry name" value="Anion_exchange"/>
</dbReference>
<dbReference type="InterPro" id="IPR002979">
    <property type="entry name" value="Anion_exchange_3"/>
</dbReference>
<dbReference type="InterPro" id="IPR018241">
    <property type="entry name" value="Anion_exchange_CS"/>
</dbReference>
<dbReference type="InterPro" id="IPR013769">
    <property type="entry name" value="Band3_cytoplasmic_dom"/>
</dbReference>
<dbReference type="InterPro" id="IPR011531">
    <property type="entry name" value="HCO3_transpt-like_TM_dom"/>
</dbReference>
<dbReference type="InterPro" id="IPR003020">
    <property type="entry name" value="HCO3_transpt_euk"/>
</dbReference>
<dbReference type="InterPro" id="IPR016152">
    <property type="entry name" value="PTrfase/Anion_transptr"/>
</dbReference>
<dbReference type="NCBIfam" id="TIGR00834">
    <property type="entry name" value="ae"/>
    <property type="match status" value="1"/>
</dbReference>
<dbReference type="PANTHER" id="PTHR11453">
    <property type="entry name" value="ANION EXCHANGE PROTEIN"/>
    <property type="match status" value="1"/>
</dbReference>
<dbReference type="PANTHER" id="PTHR11453:SF15">
    <property type="entry name" value="ANION EXCHANGE PROTEIN 3"/>
    <property type="match status" value="1"/>
</dbReference>
<dbReference type="Pfam" id="PF07565">
    <property type="entry name" value="Band_3_cyto"/>
    <property type="match status" value="1"/>
</dbReference>
<dbReference type="Pfam" id="PF00955">
    <property type="entry name" value="HCO3_cotransp"/>
    <property type="match status" value="2"/>
</dbReference>
<dbReference type="PRINTS" id="PR00165">
    <property type="entry name" value="ANIONEXCHNGR"/>
</dbReference>
<dbReference type="PRINTS" id="PR01189">
    <property type="entry name" value="ANIONEXHNGR3"/>
</dbReference>
<dbReference type="PRINTS" id="PR01231">
    <property type="entry name" value="HCO3TRNSPORT"/>
</dbReference>
<dbReference type="SUPFAM" id="SSF55804">
    <property type="entry name" value="Phoshotransferase/anion transport protein"/>
    <property type="match status" value="1"/>
</dbReference>
<dbReference type="PROSITE" id="PS00219">
    <property type="entry name" value="ANION_EXCHANGER_1"/>
    <property type="match status" value="1"/>
</dbReference>
<dbReference type="PROSITE" id="PS00220">
    <property type="entry name" value="ANION_EXCHANGER_2"/>
    <property type="match status" value="1"/>
</dbReference>
<sequence length="1227" mass="135407">MANGVIPPPGGPSPLPQVRVPLEEPPLGPDVEEEDDDLGKTLAVSRFGDLISKTPAWDPEKPSRSYSERDFEFHRHTSHHTHHPLSARLPPPHKLRRLPPTSARHARRKRKKEKTSAPPSEGTPPIQEEGGAGAEEEEEEEEEEEGESEAEPVEPPPPGPPQKAKFSIGSDEDDSPGLSIKAPCAKALPSVGLPSDQSPQRSGSSPSPRARASRISTEKSRPWSPSASYDLRERLCPGSALGNPGPEQRVPTDEAEAQMLGSADLDDMKSHRLEDNPGVRRHLVKKPSRIQGGRGSPSGLAPILRRKKKKKKLDRRPHEVFVELNELMLDRSQEPHWRETARWIKFEEDVEEETERWGKPHVASLSFRSLLELRRTIAQGAALLDLEQTTLPGIAHLVVETMIVSDQIRPEDRASVLRTLLLKHSHPNDDKDSGFFPRNPSSSSVNSVLGNHHPTPSHGPDGAVPTMADDLGEPAPLWPHDPDAKEKPLHMPGGDGHRGKSLKLLEKIPEDAEATVVLVGSVPFLEQPAAAFVRLSEAVLLESVLEVPVPVRFLFVMLGPSHTSTDYHELGRSIATLMSDKLFHEAAYQADDRQDLLGAISEFLDGSIVIPPSEVEGRDLLRSVAAFQRELLRKRREREQTKVEMTTRGGYVAPGKELSLEMGGSEATSEDDPLQRTGSVFGGLVRDVKRRYPHYPSDLRDALHSQCVAAVLFIYFAALSPAITFGGLLGEKTEGLMGVSELIVSTAVLGVLFSLLGAQPLLVVGFSGPLLVFEEAFFKFCRAQDLEYLTGRVWVGLWLVVFVLALVAAEGSFLVRYISPFTQEIFAFLISLIFIYETFHKLYKVFTEHPLLPFYPPEEALEPGLELNSSALPPTEGPPGPRNQPNTALLSLILMLGTFLIAFFLRKFRNSRFLGGKARRVIGDFGIPISILVMVLVDYSITDTYTQKLTVPTGLSVTSPHKRTWFIPPLGSARPFPPWMMVAAAVPALLVLILIFMETQITALIVSQKARRLLKGSGFHLDLLLIGSLGGLCGLFGLPWLTAATVRSVTHVNALTVMRTAIAPGDKPQIQEVREQRVTGVLIASLVGLSIVMGAVLRRIPLAVLFGIFLYMGVTSLSGIQLSQRLLLIFMPAKHHPEQPYVTKVKTWRMHLFTFIQLGCIALLWVVKSTVASLAFPFLLLLTVPLRRCLLPRLFQDRELQALDSEDAEPNFDEDGQDEYNELHMPV</sequence>
<name>B3A3_RAT</name>
<evidence type="ECO:0000250" key="1"/>
<evidence type="ECO:0000250" key="2">
    <source>
        <dbReference type="UniProtKB" id="P16283"/>
    </source>
</evidence>
<evidence type="ECO:0000250" key="3">
    <source>
        <dbReference type="UniProtKB" id="P48751"/>
    </source>
</evidence>
<evidence type="ECO:0000255" key="4"/>
<evidence type="ECO:0000256" key="5">
    <source>
        <dbReference type="SAM" id="MobiDB-lite"/>
    </source>
</evidence>
<evidence type="ECO:0000269" key="6">
    <source>
    </source>
</evidence>
<evidence type="ECO:0000269" key="7">
    <source>
    </source>
</evidence>
<evidence type="ECO:0000305" key="8"/>
<evidence type="ECO:0007744" key="9">
    <source>
    </source>
</evidence>
<gene>
    <name type="primary">Slc4a3</name>
    <name type="synonym">Ae3</name>
    <name type="synonym">B3rp3</name>
</gene>
<protein>
    <recommendedName>
        <fullName>Anion exchange protein 3</fullName>
        <shortName>AE 3</shortName>
        <shortName>Anion exchanger 3</shortName>
    </recommendedName>
    <alternativeName>
        <fullName>Band 3-related protein 3</fullName>
        <shortName>B3RP-3</shortName>
    </alternativeName>
    <alternativeName>
        <fullName>Neuronal band 3-like protein</fullName>
    </alternativeName>
    <alternativeName>
        <fullName>Solute carrier family 4 member 3</fullName>
    </alternativeName>
</protein>
<proteinExistence type="evidence at protein level"/>
<accession>P23348</accession>
<keyword id="KW-0039">Anion exchange</keyword>
<keyword id="KW-0050">Antiport</keyword>
<keyword id="KW-1003">Cell membrane</keyword>
<keyword id="KW-0325">Glycoprotein</keyword>
<keyword id="KW-0406">Ion transport</keyword>
<keyword id="KW-0449">Lipoprotein</keyword>
<keyword id="KW-0472">Membrane</keyword>
<keyword id="KW-0488">Methylation</keyword>
<keyword id="KW-0564">Palmitate</keyword>
<keyword id="KW-0597">Phosphoprotein</keyword>
<keyword id="KW-1185">Reference proteome</keyword>
<keyword id="KW-0812">Transmembrane</keyword>
<keyword id="KW-1133">Transmembrane helix</keyword>
<keyword id="KW-0813">Transport</keyword>
<feature type="chain" id="PRO_0000079222" description="Anion exchange protein 3">
    <location>
        <begin position="1"/>
        <end position="1227"/>
    </location>
</feature>
<feature type="topological domain" description="Cytoplasmic">
    <location>
        <begin position="1"/>
        <end position="707"/>
    </location>
</feature>
<feature type="transmembrane region" description="Helical" evidence="4">
    <location>
        <begin position="708"/>
        <end position="730"/>
    </location>
</feature>
<feature type="transmembrane region" description="Helical" evidence="4">
    <location>
        <begin position="736"/>
        <end position="773"/>
    </location>
</feature>
<feature type="transmembrane region" description="Helical" evidence="4">
    <location>
        <begin position="793"/>
        <end position="815"/>
    </location>
</feature>
<feature type="transmembrane region" description="Helical" evidence="4">
    <location>
        <begin position="825"/>
        <end position="846"/>
    </location>
</feature>
<feature type="transmembrane region" description="Helical" evidence="4">
    <location>
        <begin position="888"/>
        <end position="905"/>
    </location>
</feature>
<feature type="topological domain" description="Cytoplasmic" evidence="4">
    <location>
        <begin position="906"/>
        <end position="920"/>
    </location>
</feature>
<feature type="transmembrane region" description="Helical" evidence="4">
    <location>
        <begin position="921"/>
        <end position="941"/>
    </location>
</feature>
<feature type="transmembrane region" description="Helical" evidence="4">
    <location>
        <begin position="975"/>
        <end position="997"/>
    </location>
</feature>
<feature type="transmembrane region" description="Helical" evidence="4">
    <location>
        <begin position="1023"/>
        <end position="1044"/>
    </location>
</feature>
<feature type="transmembrane region" description="Helical" evidence="4">
    <location>
        <begin position="1078"/>
        <end position="1123"/>
    </location>
</feature>
<feature type="transmembrane region" description="Helical" evidence="4">
    <location>
        <begin position="1150"/>
        <end position="1186"/>
    </location>
</feature>
<feature type="region of interest" description="Disordered" evidence="5">
    <location>
        <begin position="1"/>
        <end position="255"/>
    </location>
</feature>
<feature type="region of interest" description="Disordered" evidence="5">
    <location>
        <begin position="286"/>
        <end position="312"/>
    </location>
</feature>
<feature type="region of interest" description="Disordered" evidence="5">
    <location>
        <begin position="428"/>
        <end position="497"/>
    </location>
</feature>
<feature type="region of interest" description="Membrane (anion exchange)">
    <location>
        <begin position="708"/>
        <end position="1227"/>
    </location>
</feature>
<feature type="compositionally biased region" description="Pro residues" evidence="5">
    <location>
        <begin position="1"/>
        <end position="15"/>
    </location>
</feature>
<feature type="compositionally biased region" description="Basic and acidic residues" evidence="5">
    <location>
        <begin position="58"/>
        <end position="75"/>
    </location>
</feature>
<feature type="compositionally biased region" description="Basic residues" evidence="5">
    <location>
        <begin position="76"/>
        <end position="97"/>
    </location>
</feature>
<feature type="compositionally biased region" description="Basic residues" evidence="5">
    <location>
        <begin position="104"/>
        <end position="113"/>
    </location>
</feature>
<feature type="compositionally biased region" description="Acidic residues" evidence="5">
    <location>
        <begin position="134"/>
        <end position="152"/>
    </location>
</feature>
<feature type="compositionally biased region" description="Low complexity" evidence="5">
    <location>
        <begin position="194"/>
        <end position="215"/>
    </location>
</feature>
<feature type="compositionally biased region" description="Low complexity" evidence="5">
    <location>
        <begin position="435"/>
        <end position="448"/>
    </location>
</feature>
<feature type="compositionally biased region" description="Basic and acidic residues" evidence="5">
    <location>
        <begin position="480"/>
        <end position="497"/>
    </location>
</feature>
<feature type="modified residue" description="Phosphoserine" evidence="9">
    <location>
        <position position="167"/>
    </location>
</feature>
<feature type="modified residue" description="Phosphoserine" evidence="9">
    <location>
        <position position="170"/>
    </location>
</feature>
<feature type="modified residue" description="Phosphoserine" evidence="9">
    <location>
        <position position="175"/>
    </location>
</feature>
<feature type="modified residue" description="Phosphoserine" evidence="9">
    <location>
        <position position="198"/>
    </location>
</feature>
<feature type="modified residue" description="Omega-N-methylarginine" evidence="2">
    <location>
        <position position="294"/>
    </location>
</feature>
<feature type="lipid moiety-binding region" description="S-palmitoyl cysteine" evidence="1">
    <location>
        <position position="1160"/>
    </location>
</feature>
<feature type="glycosylation site" description="N-linked (GlcNAc...) asparagine" evidence="4">
    <location>
        <position position="868"/>
    </location>
</feature>
<reference key="1">
    <citation type="journal article" date="1990" name="J. Biol. Chem.">
        <title>cDNA cloning and tissue distribution of mRNAs for two proteins that are related to the band 3 Cl-/HCO3-exchanger.</title>
        <authorList>
            <person name="Kudrycki K.E."/>
            <person name="Newman P.R."/>
            <person name="Shull G.E."/>
        </authorList>
    </citation>
    <scope>NUCLEOTIDE SEQUENCE [MRNA]</scope>
    <scope>TISSUE SPECIFICITY</scope>
</reference>
<reference key="2">
    <citation type="journal article" date="2012" name="Nat. Commun.">
        <title>Quantitative maps of protein phosphorylation sites across 14 different rat organs and tissues.</title>
        <authorList>
            <person name="Lundby A."/>
            <person name="Secher A."/>
            <person name="Lage K."/>
            <person name="Nordsborg N.B."/>
            <person name="Dmytriyev A."/>
            <person name="Lundby C."/>
            <person name="Olsen J.V."/>
        </authorList>
    </citation>
    <scope>PHOSPHORYLATION [LARGE SCALE ANALYSIS] AT SER-167; SER-170; SER-175 AND SER-198</scope>
    <scope>IDENTIFICATION BY MASS SPECTROMETRY [LARGE SCALE ANALYSIS]</scope>
</reference>
<reference key="3">
    <citation type="journal article" date="1999" name="Biochem. J.">
        <title>Transport activity of AE3 chloride/bicarbonate anion-exchange proteins and their regulation by intracellular pH.</title>
        <authorList>
            <person name="Sterling D."/>
            <person name="Casey J.R."/>
        </authorList>
    </citation>
    <scope>FUNCTION</scope>
    <scope>TRANSPORTER ACTIVITY</scope>
    <scope>SUBCELLULAR LOCATION</scope>
    <scope>ACTIVITY REGULATION</scope>
</reference>